<dbReference type="EMBL" id="AE000516">
    <property type="protein sequence ID" value="AAK46976.1"/>
    <property type="molecule type" value="Genomic_DNA"/>
</dbReference>
<dbReference type="PIR" id="A70726">
    <property type="entry name" value="A70726"/>
</dbReference>
<dbReference type="RefSeq" id="WP_003917653.1">
    <property type="nucleotide sequence ID" value="NZ_KK341227.1"/>
</dbReference>
<dbReference type="SMR" id="P9WGN8"/>
<dbReference type="KEGG" id="mtc:MT2663"/>
<dbReference type="PATRIC" id="fig|83331.31.peg.2870"/>
<dbReference type="HOGENOM" id="CLU_050012_2_0_11"/>
<dbReference type="Proteomes" id="UP000001020">
    <property type="component" value="Chromosome"/>
</dbReference>
<dbReference type="GO" id="GO:0005886">
    <property type="term" value="C:plasma membrane"/>
    <property type="evidence" value="ECO:0007669"/>
    <property type="project" value="UniProtKB-SubCell"/>
</dbReference>
<dbReference type="GO" id="GO:0015450">
    <property type="term" value="F:protein-transporting ATPase activity"/>
    <property type="evidence" value="ECO:0007669"/>
    <property type="project" value="InterPro"/>
</dbReference>
<dbReference type="GO" id="GO:0065002">
    <property type="term" value="P:intracellular protein transmembrane transport"/>
    <property type="evidence" value="ECO:0007669"/>
    <property type="project" value="UniProtKB-UniRule"/>
</dbReference>
<dbReference type="GO" id="GO:0006605">
    <property type="term" value="P:protein targeting"/>
    <property type="evidence" value="ECO:0007669"/>
    <property type="project" value="UniProtKB-UniRule"/>
</dbReference>
<dbReference type="GO" id="GO:0043952">
    <property type="term" value="P:protein transport by the Sec complex"/>
    <property type="evidence" value="ECO:0007669"/>
    <property type="project" value="UniProtKB-UniRule"/>
</dbReference>
<dbReference type="FunFam" id="1.20.1640.10:FF:000023">
    <property type="entry name" value="Protein-export membrane protein SecF"/>
    <property type="match status" value="1"/>
</dbReference>
<dbReference type="Gene3D" id="1.20.1640.10">
    <property type="entry name" value="Multidrug efflux transporter AcrB transmembrane domain"/>
    <property type="match status" value="1"/>
</dbReference>
<dbReference type="HAMAP" id="MF_01464_B">
    <property type="entry name" value="SecF_B"/>
    <property type="match status" value="1"/>
</dbReference>
<dbReference type="InterPro" id="IPR022813">
    <property type="entry name" value="SecD/SecF_arch_bac"/>
</dbReference>
<dbReference type="InterPro" id="IPR022645">
    <property type="entry name" value="SecD/SecF_bac"/>
</dbReference>
<dbReference type="InterPro" id="IPR022646">
    <property type="entry name" value="SecD/SecF_CS"/>
</dbReference>
<dbReference type="InterPro" id="IPR048634">
    <property type="entry name" value="SecD_SecF_C"/>
</dbReference>
<dbReference type="InterPro" id="IPR055344">
    <property type="entry name" value="SecD_SecF_C_bact"/>
</dbReference>
<dbReference type="InterPro" id="IPR005665">
    <property type="entry name" value="SecF_bac"/>
</dbReference>
<dbReference type="NCBIfam" id="TIGR00916">
    <property type="entry name" value="2A0604s01"/>
    <property type="match status" value="1"/>
</dbReference>
<dbReference type="NCBIfam" id="TIGR00966">
    <property type="entry name" value="transloc_SecF"/>
    <property type="match status" value="1"/>
</dbReference>
<dbReference type="PANTHER" id="PTHR30081:SF8">
    <property type="entry name" value="PROTEIN TRANSLOCASE SUBUNIT SECF"/>
    <property type="match status" value="1"/>
</dbReference>
<dbReference type="PANTHER" id="PTHR30081">
    <property type="entry name" value="PROTEIN-EXPORT MEMBRANE PROTEIN SEC"/>
    <property type="match status" value="1"/>
</dbReference>
<dbReference type="Pfam" id="PF07549">
    <property type="entry name" value="Sec_GG"/>
    <property type="match status" value="1"/>
</dbReference>
<dbReference type="Pfam" id="PF02355">
    <property type="entry name" value="SecD_SecF_C"/>
    <property type="match status" value="1"/>
</dbReference>
<dbReference type="PRINTS" id="PR01755">
    <property type="entry name" value="SECFTRNLCASE"/>
</dbReference>
<dbReference type="SUPFAM" id="SSF82866">
    <property type="entry name" value="Multidrug efflux transporter AcrB transmembrane domain"/>
    <property type="match status" value="1"/>
</dbReference>
<evidence type="ECO:0000255" key="1">
    <source>
        <dbReference type="HAMAP-Rule" id="MF_01464"/>
    </source>
</evidence>
<evidence type="ECO:0000256" key="2">
    <source>
        <dbReference type="SAM" id="MobiDB-lite"/>
    </source>
</evidence>
<comment type="function">
    <text evidence="1">Part of the Sec protein translocase complex. Interacts with the SecYEG preprotein conducting channel. SecDF uses the proton motive force (PMF) to complete protein translocation after the ATP-dependent function of SecA.</text>
</comment>
<comment type="subunit">
    <text evidence="1">Forms a complex with SecD. Part of the essential Sec protein translocation apparatus which comprises SecA, SecYEG and auxiliary proteins SecDF. Other proteins may also be involved.</text>
</comment>
<comment type="subcellular location">
    <subcellularLocation>
        <location evidence="1">Cell membrane</location>
        <topology evidence="1">Multi-pass membrane protein</topology>
    </subcellularLocation>
</comment>
<comment type="similarity">
    <text evidence="1">Belongs to the SecD/SecF family. SecF subfamily.</text>
</comment>
<gene>
    <name evidence="1" type="primary">secF</name>
    <name type="ordered locus">MT2663</name>
</gene>
<organism>
    <name type="scientific">Mycobacterium tuberculosis (strain CDC 1551 / Oshkosh)</name>
    <dbReference type="NCBI Taxonomy" id="83331"/>
    <lineage>
        <taxon>Bacteria</taxon>
        <taxon>Bacillati</taxon>
        <taxon>Actinomycetota</taxon>
        <taxon>Actinomycetes</taxon>
        <taxon>Mycobacteriales</taxon>
        <taxon>Mycobacteriaceae</taxon>
        <taxon>Mycobacterium</taxon>
        <taxon>Mycobacterium tuberculosis complex</taxon>
    </lineage>
</organism>
<proteinExistence type="inferred from homology"/>
<feature type="chain" id="PRO_0000428329" description="Protein translocase subunit SecF">
    <location>
        <begin position="1"/>
        <end position="442"/>
    </location>
</feature>
<feature type="transmembrane region" description="Helical" evidence="1">
    <location>
        <begin position="67"/>
        <end position="87"/>
    </location>
</feature>
<feature type="transmembrane region" description="Helical" evidence="1">
    <location>
        <begin position="187"/>
        <end position="207"/>
    </location>
</feature>
<feature type="transmembrane region" description="Helical" evidence="1">
    <location>
        <begin position="218"/>
        <end position="238"/>
    </location>
</feature>
<feature type="transmembrane region" description="Helical" evidence="1">
    <location>
        <begin position="243"/>
        <end position="263"/>
    </location>
</feature>
<feature type="transmembrane region" description="Helical" evidence="1">
    <location>
        <begin position="301"/>
        <end position="321"/>
    </location>
</feature>
<feature type="transmembrane region" description="Helical" evidence="1">
    <location>
        <begin position="331"/>
        <end position="351"/>
    </location>
</feature>
<feature type="region of interest" description="Disordered" evidence="2">
    <location>
        <begin position="1"/>
        <end position="39"/>
    </location>
</feature>
<feature type="region of interest" description="Disordered" evidence="2">
    <location>
        <begin position="366"/>
        <end position="442"/>
    </location>
</feature>
<feature type="compositionally biased region" description="Low complexity" evidence="2">
    <location>
        <begin position="402"/>
        <end position="432"/>
    </location>
</feature>
<feature type="compositionally biased region" description="Basic residues" evidence="2">
    <location>
        <begin position="433"/>
        <end position="442"/>
    </location>
</feature>
<reference key="1">
    <citation type="journal article" date="2002" name="J. Bacteriol.">
        <title>Whole-genome comparison of Mycobacterium tuberculosis clinical and laboratory strains.</title>
        <authorList>
            <person name="Fleischmann R.D."/>
            <person name="Alland D."/>
            <person name="Eisen J.A."/>
            <person name="Carpenter L."/>
            <person name="White O."/>
            <person name="Peterson J.D."/>
            <person name="DeBoy R.T."/>
            <person name="Dodson R.J."/>
            <person name="Gwinn M.L."/>
            <person name="Haft D.H."/>
            <person name="Hickey E.K."/>
            <person name="Kolonay J.F."/>
            <person name="Nelson W.C."/>
            <person name="Umayam L.A."/>
            <person name="Ermolaeva M.D."/>
            <person name="Salzberg S.L."/>
            <person name="Delcher A."/>
            <person name="Utterback T.R."/>
            <person name="Weidman J.F."/>
            <person name="Khouri H.M."/>
            <person name="Gill J."/>
            <person name="Mikula A."/>
            <person name="Bishai W."/>
            <person name="Jacobs W.R. Jr."/>
            <person name="Venter J.C."/>
            <person name="Fraser C.M."/>
        </authorList>
    </citation>
    <scope>NUCLEOTIDE SEQUENCE [LARGE SCALE GENOMIC DNA]</scope>
    <source>
        <strain>CDC 1551 / Oshkosh</strain>
    </source>
</reference>
<accession>P9WGN8</accession>
<accession>L0TD04</accession>
<accession>Q50635</accession>
<name>SECF_MYCTO</name>
<protein>
    <recommendedName>
        <fullName>Protein translocase subunit SecF</fullName>
    </recommendedName>
</protein>
<sequence length="442" mass="47028">MASKAKTGRDDEATSAVELTEATESAVARTDGDSTTDTASKLGHHSFLSRLYTGTGAFEVVGRRRLWFGVSGAIVAVAIASIVFRGFTFGIDFKGGTTVSFPRGSTQVAQVEDVYYRALGSEPQSVVIVGAGASATVQIRSETLTSDQTAKLRDALFEAFGPKGTDGQPSKQAISDSAVSETWGGQITKKAVIALVVFLVLVALYITVRYERYMTISAITAMLFDLTVTAGVYSLVGFEVTPATVIGLLTILGFSLYDTVIVFDKVEENTHGFQHTTRRTFAEQANLAINQTFMRSINTSLIGVLPVLALMLVAVWLLGVGTLKDLALVQLIGIIIGTYSSIFFATPLLVTLRERTELVRNHTRRVLKRRNSGSPAGSEDASTDGGEQPAAADEQSLVGITQASSQSAPRAAQGSSKPAPGARPVRPVGTRRPTGKRNAGRR</sequence>
<keyword id="KW-1003">Cell membrane</keyword>
<keyword id="KW-0472">Membrane</keyword>
<keyword id="KW-0653">Protein transport</keyword>
<keyword id="KW-1185">Reference proteome</keyword>
<keyword id="KW-0811">Translocation</keyword>
<keyword id="KW-0812">Transmembrane</keyword>
<keyword id="KW-1133">Transmembrane helix</keyword>
<keyword id="KW-0813">Transport</keyword>